<gene>
    <name type="ORF">DDB_G0281937</name>
</gene>
<accession>Q54TC5</accession>
<comment type="function">
    <text evidence="1">Nucleoside triphosphate pyrophosphatase that hydrolyzes 7-methyl-GTP (m(7)GTP). May have a dual role in cell division arrest and in preventing the incorporation of modified nucleotides into cellular nucleic acids.</text>
</comment>
<comment type="catalytic activity">
    <reaction evidence="1">
        <text>N(7)-methyl-GTP + H2O = N(7)-methyl-GMP + diphosphate + H(+)</text>
        <dbReference type="Rhea" id="RHEA:58744"/>
        <dbReference type="ChEBI" id="CHEBI:15377"/>
        <dbReference type="ChEBI" id="CHEBI:15378"/>
        <dbReference type="ChEBI" id="CHEBI:33019"/>
        <dbReference type="ChEBI" id="CHEBI:58285"/>
        <dbReference type="ChEBI" id="CHEBI:87133"/>
    </reaction>
</comment>
<comment type="subcellular location">
    <subcellularLocation>
        <location evidence="2">Cytoplasm</location>
    </subcellularLocation>
</comment>
<comment type="similarity">
    <text evidence="2">Belongs to the Maf family. YceF subfamily.</text>
</comment>
<protein>
    <recommendedName>
        <fullName evidence="1">7-methyl-GTP pyrophosphatase</fullName>
        <shortName evidence="1">m(7)GTP pyrophosphatase</shortName>
        <ecNumber evidence="1">3.6.1.-</ecNumber>
    </recommendedName>
    <alternativeName>
        <fullName>Maf-like protein DDB_G0281937</fullName>
    </alternativeName>
</protein>
<dbReference type="EC" id="3.6.1.-" evidence="1"/>
<dbReference type="EMBL" id="AAFI02000043">
    <property type="protein sequence ID" value="EAL66528.1"/>
    <property type="molecule type" value="Genomic_DNA"/>
</dbReference>
<dbReference type="RefSeq" id="XP_640464.1">
    <property type="nucleotide sequence ID" value="XM_635372.1"/>
</dbReference>
<dbReference type="SMR" id="Q54TC5"/>
<dbReference type="PaxDb" id="44689-DDB0267059"/>
<dbReference type="EnsemblProtists" id="EAL66528">
    <property type="protein sequence ID" value="EAL66528"/>
    <property type="gene ID" value="DDB_G0281937"/>
</dbReference>
<dbReference type="GeneID" id="8623277"/>
<dbReference type="KEGG" id="ddi:DDB_G0281937"/>
<dbReference type="dictyBase" id="DDB_G0281937"/>
<dbReference type="VEuPathDB" id="AmoebaDB:DDB_G0281937"/>
<dbReference type="eggNOG" id="KOG1509">
    <property type="taxonomic scope" value="Eukaryota"/>
</dbReference>
<dbReference type="HOGENOM" id="CLU_040416_4_1_1"/>
<dbReference type="InParanoid" id="Q54TC5"/>
<dbReference type="OMA" id="EEVCGFC"/>
<dbReference type="PhylomeDB" id="Q54TC5"/>
<dbReference type="PRO" id="PR:Q54TC5"/>
<dbReference type="Proteomes" id="UP000002195">
    <property type="component" value="Chromosome 3"/>
</dbReference>
<dbReference type="GO" id="GO:0005737">
    <property type="term" value="C:cytoplasm"/>
    <property type="evidence" value="ECO:0007669"/>
    <property type="project" value="UniProtKB-SubCell"/>
</dbReference>
<dbReference type="GO" id="GO:0047429">
    <property type="term" value="F:nucleoside triphosphate diphosphatase activity"/>
    <property type="evidence" value="ECO:0000318"/>
    <property type="project" value="GO_Central"/>
</dbReference>
<dbReference type="GO" id="GO:0009117">
    <property type="term" value="P:nucleotide metabolic process"/>
    <property type="evidence" value="ECO:0007669"/>
    <property type="project" value="UniProtKB-KW"/>
</dbReference>
<dbReference type="FunFam" id="3.90.950.10:FF:000008">
    <property type="entry name" value="Maf-like protein, expressed"/>
    <property type="match status" value="1"/>
</dbReference>
<dbReference type="Gene3D" id="3.90.950.10">
    <property type="match status" value="1"/>
</dbReference>
<dbReference type="HAMAP" id="MF_00528">
    <property type="entry name" value="Maf"/>
    <property type="match status" value="1"/>
</dbReference>
<dbReference type="InterPro" id="IPR029001">
    <property type="entry name" value="ITPase-like_fam"/>
</dbReference>
<dbReference type="InterPro" id="IPR003697">
    <property type="entry name" value="Maf-like"/>
</dbReference>
<dbReference type="PANTHER" id="PTHR43213:SF4">
    <property type="entry name" value="7-METHYL-GTP PYROPHOSPHATASE"/>
    <property type="match status" value="1"/>
</dbReference>
<dbReference type="PANTHER" id="PTHR43213">
    <property type="entry name" value="BIFUNCTIONAL DTTP/UTP PYROPHOSPHATASE/METHYLTRANSFERASE PROTEIN-RELATED"/>
    <property type="match status" value="1"/>
</dbReference>
<dbReference type="Pfam" id="PF02545">
    <property type="entry name" value="Maf"/>
    <property type="match status" value="1"/>
</dbReference>
<dbReference type="PIRSF" id="PIRSF006305">
    <property type="entry name" value="Maf"/>
    <property type="match status" value="1"/>
</dbReference>
<dbReference type="SUPFAM" id="SSF52972">
    <property type="entry name" value="ITPase-like"/>
    <property type="match status" value="1"/>
</dbReference>
<reference key="1">
    <citation type="journal article" date="2005" name="Nature">
        <title>The genome of the social amoeba Dictyostelium discoideum.</title>
        <authorList>
            <person name="Eichinger L."/>
            <person name="Pachebat J.A."/>
            <person name="Gloeckner G."/>
            <person name="Rajandream M.A."/>
            <person name="Sucgang R."/>
            <person name="Berriman M."/>
            <person name="Song J."/>
            <person name="Olsen R."/>
            <person name="Szafranski K."/>
            <person name="Xu Q."/>
            <person name="Tunggal B."/>
            <person name="Kummerfeld S."/>
            <person name="Madera M."/>
            <person name="Konfortov B.A."/>
            <person name="Rivero F."/>
            <person name="Bankier A.T."/>
            <person name="Lehmann R."/>
            <person name="Hamlin N."/>
            <person name="Davies R."/>
            <person name="Gaudet P."/>
            <person name="Fey P."/>
            <person name="Pilcher K."/>
            <person name="Chen G."/>
            <person name="Saunders D."/>
            <person name="Sodergren E.J."/>
            <person name="Davis P."/>
            <person name="Kerhornou A."/>
            <person name="Nie X."/>
            <person name="Hall N."/>
            <person name="Anjard C."/>
            <person name="Hemphill L."/>
            <person name="Bason N."/>
            <person name="Farbrother P."/>
            <person name="Desany B."/>
            <person name="Just E."/>
            <person name="Morio T."/>
            <person name="Rost R."/>
            <person name="Churcher C.M."/>
            <person name="Cooper J."/>
            <person name="Haydock S."/>
            <person name="van Driessche N."/>
            <person name="Cronin A."/>
            <person name="Goodhead I."/>
            <person name="Muzny D.M."/>
            <person name="Mourier T."/>
            <person name="Pain A."/>
            <person name="Lu M."/>
            <person name="Harper D."/>
            <person name="Lindsay R."/>
            <person name="Hauser H."/>
            <person name="James K.D."/>
            <person name="Quiles M."/>
            <person name="Madan Babu M."/>
            <person name="Saito T."/>
            <person name="Buchrieser C."/>
            <person name="Wardroper A."/>
            <person name="Felder M."/>
            <person name="Thangavelu M."/>
            <person name="Johnson D."/>
            <person name="Knights A."/>
            <person name="Loulseged H."/>
            <person name="Mungall K.L."/>
            <person name="Oliver K."/>
            <person name="Price C."/>
            <person name="Quail M.A."/>
            <person name="Urushihara H."/>
            <person name="Hernandez J."/>
            <person name="Rabbinowitsch E."/>
            <person name="Steffen D."/>
            <person name="Sanders M."/>
            <person name="Ma J."/>
            <person name="Kohara Y."/>
            <person name="Sharp S."/>
            <person name="Simmonds M.N."/>
            <person name="Spiegler S."/>
            <person name="Tivey A."/>
            <person name="Sugano S."/>
            <person name="White B."/>
            <person name="Walker D."/>
            <person name="Woodward J.R."/>
            <person name="Winckler T."/>
            <person name="Tanaka Y."/>
            <person name="Shaulsky G."/>
            <person name="Schleicher M."/>
            <person name="Weinstock G.M."/>
            <person name="Rosenthal A."/>
            <person name="Cox E.C."/>
            <person name="Chisholm R.L."/>
            <person name="Gibbs R.A."/>
            <person name="Loomis W.F."/>
            <person name="Platzer M."/>
            <person name="Kay R.R."/>
            <person name="Williams J.G."/>
            <person name="Dear P.H."/>
            <person name="Noegel A.A."/>
            <person name="Barrell B.G."/>
            <person name="Kuspa A."/>
        </authorList>
    </citation>
    <scope>NUCLEOTIDE SEQUENCE [LARGE SCALE GENOMIC DNA]</scope>
    <source>
        <strain>AX4</strain>
    </source>
</reference>
<evidence type="ECO:0000250" key="1">
    <source>
        <dbReference type="UniProtKB" id="P0A729"/>
    </source>
</evidence>
<evidence type="ECO:0000305" key="2"/>
<name>NTPPB_DICDI</name>
<sequence length="197" mass="22118">MTSRPLILGSSSIWRKQVLIDMGYIFKTMSPDIDEKAIRDSDPKTLTLLISRAKAQALLKRIKESDDELDKKSIMICSDQVIVHNGVIREKPETEQQCREYLQSYEFHPAVAVVSVVVVNIETGKIVEGTDIATQHFKKISDEFIDKLIKQGDVMHCAGGFTVEHMADFTLQLEGEVETILGLPKTLTKNLISQVSQ</sequence>
<proteinExistence type="inferred from homology"/>
<feature type="chain" id="PRO_0000331374" description="7-methyl-GTP pyrophosphatase">
    <location>
        <begin position="1"/>
        <end position="197"/>
    </location>
</feature>
<feature type="active site" description="Proton acceptor" evidence="1">
    <location>
        <position position="79"/>
    </location>
</feature>
<feature type="site" description="Important for substrate specificity" evidence="1">
    <location>
        <position position="14"/>
    </location>
</feature>
<feature type="site" description="Important for substrate specificity" evidence="1">
    <location>
        <position position="80"/>
    </location>
</feature>
<feature type="site" description="Important for substrate specificity" evidence="1">
    <location>
        <position position="164"/>
    </location>
</feature>
<organism>
    <name type="scientific">Dictyostelium discoideum</name>
    <name type="common">Social amoeba</name>
    <dbReference type="NCBI Taxonomy" id="44689"/>
    <lineage>
        <taxon>Eukaryota</taxon>
        <taxon>Amoebozoa</taxon>
        <taxon>Evosea</taxon>
        <taxon>Eumycetozoa</taxon>
        <taxon>Dictyostelia</taxon>
        <taxon>Dictyosteliales</taxon>
        <taxon>Dictyosteliaceae</taxon>
        <taxon>Dictyostelium</taxon>
    </lineage>
</organism>
<keyword id="KW-0963">Cytoplasm</keyword>
<keyword id="KW-0378">Hydrolase</keyword>
<keyword id="KW-0546">Nucleotide metabolism</keyword>
<keyword id="KW-1185">Reference proteome</keyword>